<comment type="function">
    <text evidence="1">The UvrABC repair system catalyzes the recognition and processing of DNA lesions. UvrA is an ATPase and a DNA-binding protein. A damage recognition complex composed of 2 UvrA and 2 UvrB subunits scans DNA for abnormalities. When the presence of a lesion has been verified by UvrB, the UvrA molecules dissociate.</text>
</comment>
<comment type="subunit">
    <text evidence="1">Forms a heterotetramer with UvrB during the search for lesions.</text>
</comment>
<comment type="subcellular location">
    <subcellularLocation>
        <location evidence="1">Cytoplasm</location>
    </subcellularLocation>
</comment>
<comment type="similarity">
    <text evidence="1">Belongs to the ABC transporter superfamily. UvrA family.</text>
</comment>
<sequence>MDKIEVRGARTHNLKNINLVIPRDKLIVVTGLSGSGKSSLAFDTLYAEGQRRYVESLSAYARQFLSLMEKPDVDHIEGLSPAISIEQKSTSHNPRSTVGTITEIHDYLRLLYARVGEPRCPDHDVPLAAQTVSQMVDNVLSQPEGKRLMLLAPIIKERKGEHTKTLENLASQGYIRARIDGEVCDLSDPPKLELQKKHTIEVVVDRFKVRDDLTQRLAESFETALELSGGTAVVADMDDPKAEELLFSANFACPICGYSMRELEPRLFSFNNPAGACPTCDGLGVQQYFDPDRVIQNPELSLAGGAIRGWDRRNFYYFQMLKSLADHYKFDVEAPWGSLSANVHKVVLYGSGKENIEFKYMNDRGDTSIRRHPFEGVLHNMERRYKETESSAVREELAKFISNRPCASCEGTRLRREARHVYVENTPLPAISDMSIGHAMEFFNNLKLAGQRAKIAEKILKEIGDRLKFLVNVGLNYLTLSRSAETLSGGEAQRIRLASQIGAGLVGVMYVLDEPSIGLHQRDNERLLGTLIHLRDLGNTVIVVEHDEDAIRAADHVIDIGPGAGVHGGEVVAEGPLEAIMAVPESLTGQYMSGKRKIEVPKKRVPANPEKVLKLTGARGNNLKDVTLTLPVGLFTCITGVSGSGKSTLINDTLFPIAQRQLNGATIAEPAPYRDIQGLEHFDKVIDIDQSPIGRTPRSNPATYTGVFTPVRELFAGVPESRARGYTPGRFSFNVRGGRCEACQGDGVIKVEMHFLPDIYVPCDQCKGKRYNRETLEIKYKGKTIHEVLDMTIEEAREFFDAVPALARKLQTLMDVGLTYIRLGQSATTLSGGEAQRVKLARELSKRGTGQTLYILDEPTTGLHFADIQQLLDVLHKLRDQGNTIVVIEHNLDVIKTADWIVDLGPEGGSGGGEILVSGTPETVAECEASHTARFLKPML</sequence>
<reference key="1">
    <citation type="journal article" date="2001" name="Nature">
        <title>Genome sequence of enterohaemorrhagic Escherichia coli O157:H7.</title>
        <authorList>
            <person name="Perna N.T."/>
            <person name="Plunkett G. III"/>
            <person name="Burland V."/>
            <person name="Mau B."/>
            <person name="Glasner J.D."/>
            <person name="Rose D.J."/>
            <person name="Mayhew G.F."/>
            <person name="Evans P.S."/>
            <person name="Gregor J."/>
            <person name="Kirkpatrick H.A."/>
            <person name="Posfai G."/>
            <person name="Hackett J."/>
            <person name="Klink S."/>
            <person name="Boutin A."/>
            <person name="Shao Y."/>
            <person name="Miller L."/>
            <person name="Grotbeck E.J."/>
            <person name="Davis N.W."/>
            <person name="Lim A."/>
            <person name="Dimalanta E.T."/>
            <person name="Potamousis K."/>
            <person name="Apodaca J."/>
            <person name="Anantharaman T.S."/>
            <person name="Lin J."/>
            <person name="Yen G."/>
            <person name="Schwartz D.C."/>
            <person name="Welch R.A."/>
            <person name="Blattner F.R."/>
        </authorList>
    </citation>
    <scope>NUCLEOTIDE SEQUENCE [LARGE SCALE GENOMIC DNA]</scope>
    <source>
        <strain>O157:H7 / EDL933 / ATCC 700927 / EHEC</strain>
    </source>
</reference>
<reference key="2">
    <citation type="journal article" date="2001" name="DNA Res.">
        <title>Complete genome sequence of enterohemorrhagic Escherichia coli O157:H7 and genomic comparison with a laboratory strain K-12.</title>
        <authorList>
            <person name="Hayashi T."/>
            <person name="Makino K."/>
            <person name="Ohnishi M."/>
            <person name="Kurokawa K."/>
            <person name="Ishii K."/>
            <person name="Yokoyama K."/>
            <person name="Han C.-G."/>
            <person name="Ohtsubo E."/>
            <person name="Nakayama K."/>
            <person name="Murata T."/>
            <person name="Tanaka M."/>
            <person name="Tobe T."/>
            <person name="Iida T."/>
            <person name="Takami H."/>
            <person name="Honda T."/>
            <person name="Sasakawa C."/>
            <person name="Ogasawara N."/>
            <person name="Yasunaga T."/>
            <person name="Kuhara S."/>
            <person name="Shiba T."/>
            <person name="Hattori M."/>
            <person name="Shinagawa H."/>
        </authorList>
    </citation>
    <scope>NUCLEOTIDE SEQUENCE [LARGE SCALE GENOMIC DNA]</scope>
    <source>
        <strain>O157:H7 / Sakai / RIMD 0509952 / EHEC</strain>
    </source>
</reference>
<dbReference type="EMBL" id="AE005174">
    <property type="protein sequence ID" value="AAG59256.1"/>
    <property type="molecule type" value="Genomic_DNA"/>
</dbReference>
<dbReference type="EMBL" id="BA000007">
    <property type="protein sequence ID" value="BAB38463.1"/>
    <property type="molecule type" value="Genomic_DNA"/>
</dbReference>
<dbReference type="PIR" id="D86099">
    <property type="entry name" value="D86099"/>
</dbReference>
<dbReference type="PIR" id="H91258">
    <property type="entry name" value="H91258"/>
</dbReference>
<dbReference type="RefSeq" id="NP_313067.1">
    <property type="nucleotide sequence ID" value="NC_002695.1"/>
</dbReference>
<dbReference type="RefSeq" id="WP_000357763.1">
    <property type="nucleotide sequence ID" value="NZ_VOAI01000008.1"/>
</dbReference>
<dbReference type="SMR" id="Q8X5U9"/>
<dbReference type="STRING" id="155864.Z5657"/>
<dbReference type="GeneID" id="75059255"/>
<dbReference type="GeneID" id="914295"/>
<dbReference type="KEGG" id="ece:Z5657"/>
<dbReference type="KEGG" id="ecs:ECs_5040"/>
<dbReference type="PATRIC" id="fig|386585.9.peg.5263"/>
<dbReference type="eggNOG" id="COG0178">
    <property type="taxonomic scope" value="Bacteria"/>
</dbReference>
<dbReference type="HOGENOM" id="CLU_001370_0_2_6"/>
<dbReference type="OMA" id="EFFKAVP"/>
<dbReference type="Proteomes" id="UP000000558">
    <property type="component" value="Chromosome"/>
</dbReference>
<dbReference type="Proteomes" id="UP000002519">
    <property type="component" value="Chromosome"/>
</dbReference>
<dbReference type="GO" id="GO:0005737">
    <property type="term" value="C:cytoplasm"/>
    <property type="evidence" value="ECO:0007669"/>
    <property type="project" value="UniProtKB-SubCell"/>
</dbReference>
<dbReference type="GO" id="GO:0009380">
    <property type="term" value="C:excinuclease repair complex"/>
    <property type="evidence" value="ECO:0007669"/>
    <property type="project" value="InterPro"/>
</dbReference>
<dbReference type="GO" id="GO:0005524">
    <property type="term" value="F:ATP binding"/>
    <property type="evidence" value="ECO:0007669"/>
    <property type="project" value="UniProtKB-UniRule"/>
</dbReference>
<dbReference type="GO" id="GO:0016887">
    <property type="term" value="F:ATP hydrolysis activity"/>
    <property type="evidence" value="ECO:0007669"/>
    <property type="project" value="InterPro"/>
</dbReference>
<dbReference type="GO" id="GO:0003677">
    <property type="term" value="F:DNA binding"/>
    <property type="evidence" value="ECO:0007669"/>
    <property type="project" value="UniProtKB-UniRule"/>
</dbReference>
<dbReference type="GO" id="GO:0009381">
    <property type="term" value="F:excinuclease ABC activity"/>
    <property type="evidence" value="ECO:0007669"/>
    <property type="project" value="UniProtKB-UniRule"/>
</dbReference>
<dbReference type="GO" id="GO:0008270">
    <property type="term" value="F:zinc ion binding"/>
    <property type="evidence" value="ECO:0007669"/>
    <property type="project" value="UniProtKB-UniRule"/>
</dbReference>
<dbReference type="GO" id="GO:0006289">
    <property type="term" value="P:nucleotide-excision repair"/>
    <property type="evidence" value="ECO:0007669"/>
    <property type="project" value="UniProtKB-UniRule"/>
</dbReference>
<dbReference type="GO" id="GO:0009432">
    <property type="term" value="P:SOS response"/>
    <property type="evidence" value="ECO:0007669"/>
    <property type="project" value="UniProtKB-UniRule"/>
</dbReference>
<dbReference type="CDD" id="cd03270">
    <property type="entry name" value="ABC_UvrA_I"/>
    <property type="match status" value="1"/>
</dbReference>
<dbReference type="CDD" id="cd03271">
    <property type="entry name" value="ABC_UvrA_II"/>
    <property type="match status" value="1"/>
</dbReference>
<dbReference type="FunFam" id="1.10.8.280:FF:000001">
    <property type="entry name" value="UvrABC system protein A"/>
    <property type="match status" value="1"/>
</dbReference>
<dbReference type="FunFam" id="1.20.1580.10:FF:000002">
    <property type="entry name" value="UvrABC system protein A"/>
    <property type="match status" value="1"/>
</dbReference>
<dbReference type="FunFam" id="1.20.1580.10:FF:000003">
    <property type="entry name" value="UvrABC system protein A"/>
    <property type="match status" value="1"/>
</dbReference>
<dbReference type="FunFam" id="3.30.190.20:FF:000003">
    <property type="entry name" value="UvrABC system protein A"/>
    <property type="match status" value="1"/>
</dbReference>
<dbReference type="Gene3D" id="1.10.8.280">
    <property type="entry name" value="ABC transporter ATPase domain-like"/>
    <property type="match status" value="1"/>
</dbReference>
<dbReference type="Gene3D" id="1.20.1580.10">
    <property type="entry name" value="ABC transporter ATPase like domain"/>
    <property type="match status" value="2"/>
</dbReference>
<dbReference type="Gene3D" id="3.30.1490.20">
    <property type="entry name" value="ATP-grasp fold, A domain"/>
    <property type="match status" value="1"/>
</dbReference>
<dbReference type="Gene3D" id="3.40.50.300">
    <property type="entry name" value="P-loop containing nucleotide triphosphate hydrolases"/>
    <property type="match status" value="2"/>
</dbReference>
<dbReference type="HAMAP" id="MF_00205">
    <property type="entry name" value="UvrA"/>
    <property type="match status" value="1"/>
</dbReference>
<dbReference type="InterPro" id="IPR003439">
    <property type="entry name" value="ABC_transporter-like_ATP-bd"/>
</dbReference>
<dbReference type="InterPro" id="IPR017871">
    <property type="entry name" value="ABC_transporter-like_CS"/>
</dbReference>
<dbReference type="InterPro" id="IPR013815">
    <property type="entry name" value="ATP_grasp_subdomain_1"/>
</dbReference>
<dbReference type="InterPro" id="IPR027417">
    <property type="entry name" value="P-loop_NTPase"/>
</dbReference>
<dbReference type="InterPro" id="IPR004602">
    <property type="entry name" value="UvrA"/>
</dbReference>
<dbReference type="InterPro" id="IPR041552">
    <property type="entry name" value="UvrA_DNA-bd"/>
</dbReference>
<dbReference type="InterPro" id="IPR041102">
    <property type="entry name" value="UvrA_inter"/>
</dbReference>
<dbReference type="NCBIfam" id="NF001503">
    <property type="entry name" value="PRK00349.1"/>
    <property type="match status" value="1"/>
</dbReference>
<dbReference type="NCBIfam" id="TIGR00630">
    <property type="entry name" value="uvra"/>
    <property type="match status" value="1"/>
</dbReference>
<dbReference type="PANTHER" id="PTHR43152">
    <property type="entry name" value="UVRABC SYSTEM PROTEIN A"/>
    <property type="match status" value="1"/>
</dbReference>
<dbReference type="PANTHER" id="PTHR43152:SF3">
    <property type="entry name" value="UVRABC SYSTEM PROTEIN A"/>
    <property type="match status" value="1"/>
</dbReference>
<dbReference type="Pfam" id="PF00005">
    <property type="entry name" value="ABC_tran"/>
    <property type="match status" value="1"/>
</dbReference>
<dbReference type="Pfam" id="PF17755">
    <property type="entry name" value="UvrA_DNA-bind"/>
    <property type="match status" value="1"/>
</dbReference>
<dbReference type="Pfam" id="PF17760">
    <property type="entry name" value="UvrA_inter"/>
    <property type="match status" value="1"/>
</dbReference>
<dbReference type="SUPFAM" id="SSF52540">
    <property type="entry name" value="P-loop containing nucleoside triphosphate hydrolases"/>
    <property type="match status" value="2"/>
</dbReference>
<dbReference type="PROSITE" id="PS00211">
    <property type="entry name" value="ABC_TRANSPORTER_1"/>
    <property type="match status" value="2"/>
</dbReference>
<dbReference type="PROSITE" id="PS50893">
    <property type="entry name" value="ABC_TRANSPORTER_2"/>
    <property type="match status" value="1"/>
</dbReference>
<feature type="chain" id="PRO_0000093050" description="UvrABC system protein A">
    <location>
        <begin position="1"/>
        <end position="940"/>
    </location>
</feature>
<feature type="domain" description="ABC transporter 1" evidence="1">
    <location>
        <begin position="310"/>
        <end position="587"/>
    </location>
</feature>
<feature type="domain" description="ABC transporter 2" evidence="1">
    <location>
        <begin position="607"/>
        <end position="937"/>
    </location>
</feature>
<feature type="zinc finger region" description="C4-type" evidence="1">
    <location>
        <begin position="253"/>
        <end position="280"/>
    </location>
</feature>
<feature type="zinc finger region" description="C4-type" evidence="1">
    <location>
        <begin position="740"/>
        <end position="766"/>
    </location>
</feature>
<feature type="binding site" evidence="1">
    <location>
        <begin position="31"/>
        <end position="38"/>
    </location>
    <ligand>
        <name>ATP</name>
        <dbReference type="ChEBI" id="CHEBI:30616"/>
    </ligand>
</feature>
<feature type="binding site" evidence="1">
    <location>
        <begin position="640"/>
        <end position="647"/>
    </location>
    <ligand>
        <name>ATP</name>
        <dbReference type="ChEBI" id="CHEBI:30616"/>
    </ligand>
</feature>
<name>UVRA_ECO57</name>
<accession>Q8X5U9</accession>
<protein>
    <recommendedName>
        <fullName evidence="1">UvrABC system protein A</fullName>
        <shortName evidence="1">UvrA protein</shortName>
    </recommendedName>
    <alternativeName>
        <fullName evidence="1">Excinuclease ABC subunit A</fullName>
    </alternativeName>
</protein>
<evidence type="ECO:0000255" key="1">
    <source>
        <dbReference type="HAMAP-Rule" id="MF_00205"/>
    </source>
</evidence>
<proteinExistence type="inferred from homology"/>
<keyword id="KW-0067">ATP-binding</keyword>
<keyword id="KW-0963">Cytoplasm</keyword>
<keyword id="KW-0227">DNA damage</keyword>
<keyword id="KW-0228">DNA excision</keyword>
<keyword id="KW-0234">DNA repair</keyword>
<keyword id="KW-0238">DNA-binding</keyword>
<keyword id="KW-0267">Excision nuclease</keyword>
<keyword id="KW-0479">Metal-binding</keyword>
<keyword id="KW-0547">Nucleotide-binding</keyword>
<keyword id="KW-1185">Reference proteome</keyword>
<keyword id="KW-0677">Repeat</keyword>
<keyword id="KW-0742">SOS response</keyword>
<keyword id="KW-0862">Zinc</keyword>
<keyword id="KW-0863">Zinc-finger</keyword>
<gene>
    <name evidence="1" type="primary">uvrA</name>
    <name type="ordered locus">Z5657</name>
    <name type="ordered locus">ECs5040</name>
</gene>
<organism>
    <name type="scientific">Escherichia coli O157:H7</name>
    <dbReference type="NCBI Taxonomy" id="83334"/>
    <lineage>
        <taxon>Bacteria</taxon>
        <taxon>Pseudomonadati</taxon>
        <taxon>Pseudomonadota</taxon>
        <taxon>Gammaproteobacteria</taxon>
        <taxon>Enterobacterales</taxon>
        <taxon>Enterobacteriaceae</taxon>
        <taxon>Escherichia</taxon>
    </lineage>
</organism>